<feature type="signal peptide" evidence="2">
    <location>
        <begin position="1"/>
        <end position="27"/>
    </location>
</feature>
<feature type="chain" id="PRO_0000456308" description="Carbonic anhydrase Nec1">
    <location>
        <begin position="28"/>
        <end position="276"/>
    </location>
</feature>
<feature type="domain" description="Alpha-carbonic anhydrase" evidence="4">
    <location>
        <begin position="34"/>
        <end position="270"/>
    </location>
</feature>
<feature type="region of interest" description="Substrate binding" evidence="1">
    <location>
        <begin position="216"/>
        <end position="217"/>
    </location>
</feature>
<feature type="active site" description="Proton acceptor" evidence="4">
    <location>
        <position position="98"/>
    </location>
</feature>
<feature type="binding site" evidence="4">
    <location>
        <position position="124"/>
    </location>
    <ligand>
        <name>Zn(2+)</name>
        <dbReference type="ChEBI" id="CHEBI:29105"/>
        <note>catalytic</note>
    </ligand>
</feature>
<feature type="binding site" evidence="4">
    <location>
        <position position="126"/>
    </location>
    <ligand>
        <name>Zn(2+)</name>
        <dbReference type="ChEBI" id="CHEBI:29105"/>
        <note>catalytic</note>
    </ligand>
</feature>
<feature type="binding site" evidence="4">
    <location>
        <position position="143"/>
    </location>
    <ligand>
        <name>Zn(2+)</name>
        <dbReference type="ChEBI" id="CHEBI:29105"/>
        <note>catalytic</note>
    </ligand>
</feature>
<feature type="glycosylation site" description="N-linked (GlcNAc...) asparagine" evidence="3">
    <location>
        <position position="134"/>
    </location>
</feature>
<feature type="disulfide bond" evidence="1">
    <location>
        <begin position="59"/>
        <end position="220"/>
    </location>
</feature>
<sequence length="276" mass="31559">MKMINSIFTHGSLIILLLLFHSISIKAQEVDDEREFDYLEGSELGPEKWGELRPEWGTCKRGKMQSPIDISNPVQVTSKELLQTKYKAQNAIINNRGHDIMVRWEGDAGSILINEREFDLLQAHWHAPSEHAINGTRYAMELHMLHRSTDPKLTPTMVVVAVFYEIGDVDPFLSRLGPIMSSLIDQTNEHKQAGVINPMEIQLDDECYYKYIGSLTTPSCTEGVTWIINKRINTVSSDQVKLLREAVHDHAKNNARPLQALNHREVQLHCHKDRKD</sequence>
<reference key="1">
    <citation type="journal article" date="2022" name="Proc. Natl. Acad. Sci. U.S.A.">
        <title>Convergent evolution of a blood-red nectar pigment in vertebrate-pollinated flowers.</title>
        <authorList>
            <person name="Roy R."/>
            <person name="Moreno N."/>
            <person name="Brockman S.A."/>
            <person name="Kostanecki A."/>
            <person name="Zambre A."/>
            <person name="Holl C."/>
            <person name="Solhaug E.M."/>
            <person name="Minami A."/>
            <person name="Snell-Rood E.C."/>
            <person name="Hampton M."/>
            <person name="Bee M.A."/>
            <person name="Chiari Y."/>
            <person name="Hegeman A.D."/>
            <person name="Carter C.J."/>
        </authorList>
    </citation>
    <scope>NUCLEOTIDE SEQUENCE [MRNA]</scope>
    <scope>FUNCTION</scope>
    <scope>CATALYTIC ACTIVITY</scope>
    <scope>PATHWAY</scope>
    <scope>TISSUE SPECIFICITY</scope>
</reference>
<keyword id="KW-1015">Disulfide bond</keyword>
<keyword id="KW-0325">Glycoprotein</keyword>
<keyword id="KW-0456">Lyase</keyword>
<keyword id="KW-0479">Metal-binding</keyword>
<keyword id="KW-0732">Signal</keyword>
<keyword id="KW-0862">Zinc</keyword>
<accession>P0DO50</accession>
<comment type="function">
    <text evidence="5">Involved in the production of blood-red nectar containing the alkaloid nesocodin and that serves as a visual attractant for pollinator visitation, including vertebrates such as Phelsuma geckos (PubMed:35074876). The nectar is initially acidic and pale yellow, but slowly becomes alkaline before turning into red within 24 hours (PubMed:35074876). Together with NEC2 and NEC3, facilitates the condensation of sinapaldehyde ((E)-3,5-dimethoxy-4-hydroxycinnamaldehyde) and proline to form nesocodin, a pigment with a stable imine bond (PubMed:35074876). Mediates the alkalinization (pH increase) of the flower nectar by catalyzing the reversible hydration of carbon dioxide (PubMed:35074876).</text>
</comment>
<comment type="catalytic activity">
    <reaction evidence="5">
        <text>hydrogencarbonate + H(+) = CO2 + H2O</text>
        <dbReference type="Rhea" id="RHEA:10748"/>
        <dbReference type="ChEBI" id="CHEBI:15377"/>
        <dbReference type="ChEBI" id="CHEBI:15378"/>
        <dbReference type="ChEBI" id="CHEBI:16526"/>
        <dbReference type="ChEBI" id="CHEBI:17544"/>
        <dbReference type="EC" id="4.2.1.1"/>
    </reaction>
    <physiologicalReaction direction="left-to-right" evidence="5">
        <dbReference type="Rhea" id="RHEA:10749"/>
    </physiologicalReaction>
</comment>
<comment type="cofactor">
    <cofactor evidence="1">
        <name>Zn(2+)</name>
        <dbReference type="ChEBI" id="CHEBI:29105"/>
    </cofactor>
</comment>
<comment type="pathway">
    <text evidence="5">One-carbon metabolism.</text>
</comment>
<comment type="subunit">
    <text evidence="1">Homodimer.</text>
</comment>
<comment type="tissue specificity">
    <text evidence="5">Confined to nectaries.</text>
</comment>
<comment type="similarity">
    <text evidence="7">Belongs to the alpha-class carbonic anhydrase family.</text>
</comment>
<comment type="online information" name="Protein Spotlight">
    <link uri="https://www.proteinspotlight.org/back_issues/250/"/>
    <text>The colour red - Issue 250 of August 2022</text>
</comment>
<gene>
    <name evidence="6" type="primary">NEC1</name>
</gene>
<proteinExistence type="evidence at protein level"/>
<name>NEC1_NESMA</name>
<dbReference type="EC" id="4.2.1.1" evidence="5"/>
<dbReference type="EMBL" id="OK664972">
    <property type="protein sequence ID" value="UIE54576.1"/>
    <property type="molecule type" value="mRNA"/>
</dbReference>
<dbReference type="SMR" id="P0DO50"/>
<dbReference type="GlyCosmos" id="P0DO50">
    <property type="glycosylation" value="1 site, No reported glycans"/>
</dbReference>
<dbReference type="GO" id="GO:0004089">
    <property type="term" value="F:carbonate dehydratase activity"/>
    <property type="evidence" value="ECO:0000314"/>
    <property type="project" value="UniProtKB"/>
</dbReference>
<dbReference type="GO" id="GO:0016836">
    <property type="term" value="F:hydro-lyase activity"/>
    <property type="evidence" value="ECO:0000314"/>
    <property type="project" value="UniProtKB"/>
</dbReference>
<dbReference type="GO" id="GO:0008270">
    <property type="term" value="F:zinc ion binding"/>
    <property type="evidence" value="ECO:0007669"/>
    <property type="project" value="InterPro"/>
</dbReference>
<dbReference type="GO" id="GO:0006730">
    <property type="term" value="P:one-carbon metabolic process"/>
    <property type="evidence" value="ECO:0000314"/>
    <property type="project" value="UniProtKB"/>
</dbReference>
<dbReference type="CDD" id="cd03124">
    <property type="entry name" value="alpha_CA_prokaryotic_like"/>
    <property type="match status" value="1"/>
</dbReference>
<dbReference type="Gene3D" id="3.10.200.10">
    <property type="entry name" value="Alpha carbonic anhydrase"/>
    <property type="match status" value="1"/>
</dbReference>
<dbReference type="InterPro" id="IPR041891">
    <property type="entry name" value="Alpha_CA_prokaryot-like"/>
</dbReference>
<dbReference type="InterPro" id="IPR001148">
    <property type="entry name" value="CA_dom"/>
</dbReference>
<dbReference type="InterPro" id="IPR036398">
    <property type="entry name" value="CA_dom_sf"/>
</dbReference>
<dbReference type="InterPro" id="IPR023561">
    <property type="entry name" value="Carbonic_anhydrase_a-class"/>
</dbReference>
<dbReference type="InterPro" id="IPR018338">
    <property type="entry name" value="Carbonic_anhydrase_a-class_CS"/>
</dbReference>
<dbReference type="PANTHER" id="PTHR18952">
    <property type="entry name" value="CARBONIC ANHYDRASE"/>
    <property type="match status" value="1"/>
</dbReference>
<dbReference type="PANTHER" id="PTHR18952:SF201">
    <property type="entry name" value="CARBONIC ANHYDRASE"/>
    <property type="match status" value="1"/>
</dbReference>
<dbReference type="Pfam" id="PF00194">
    <property type="entry name" value="Carb_anhydrase"/>
    <property type="match status" value="1"/>
</dbReference>
<dbReference type="SMART" id="SM01057">
    <property type="entry name" value="Carb_anhydrase"/>
    <property type="match status" value="1"/>
</dbReference>
<dbReference type="SUPFAM" id="SSF51069">
    <property type="entry name" value="Carbonic anhydrase"/>
    <property type="match status" value="1"/>
</dbReference>
<dbReference type="PROSITE" id="PS00162">
    <property type="entry name" value="ALPHA_CA_1"/>
    <property type="match status" value="1"/>
</dbReference>
<dbReference type="PROSITE" id="PS51144">
    <property type="entry name" value="ALPHA_CA_2"/>
    <property type="match status" value="1"/>
</dbReference>
<organism>
    <name type="scientific">Nesocodon mauritianus</name>
    <name type="common">Blue Mauritius bellflower</name>
    <name type="synonym">Wahlenbergia mauritiana</name>
    <dbReference type="NCBI Taxonomy" id="519296"/>
    <lineage>
        <taxon>Eukaryota</taxon>
        <taxon>Viridiplantae</taxon>
        <taxon>Streptophyta</taxon>
        <taxon>Embryophyta</taxon>
        <taxon>Tracheophyta</taxon>
        <taxon>Spermatophyta</taxon>
        <taxon>Magnoliopsida</taxon>
        <taxon>eudicotyledons</taxon>
        <taxon>Gunneridae</taxon>
        <taxon>Pentapetalae</taxon>
        <taxon>asterids</taxon>
        <taxon>campanulids</taxon>
        <taxon>Asterales</taxon>
        <taxon>Campanulaceae</taxon>
        <taxon>Nesocodon</taxon>
    </lineage>
</organism>
<evidence type="ECO:0000250" key="1">
    <source>
        <dbReference type="UniProtKB" id="Q50940"/>
    </source>
</evidence>
<evidence type="ECO:0000255" key="2"/>
<evidence type="ECO:0000255" key="3">
    <source>
        <dbReference type="PROSITE-ProRule" id="PRU00498"/>
    </source>
</evidence>
<evidence type="ECO:0000255" key="4">
    <source>
        <dbReference type="PROSITE-ProRule" id="PRU01134"/>
    </source>
</evidence>
<evidence type="ECO:0000269" key="5">
    <source>
    </source>
</evidence>
<evidence type="ECO:0000303" key="6">
    <source>
    </source>
</evidence>
<evidence type="ECO:0000305" key="7"/>
<protein>
    <recommendedName>
        <fullName evidence="6">Carbonic anhydrase Nec1</fullName>
        <ecNumber evidence="5">4.2.1.1</ecNumber>
    </recommendedName>
    <alternativeName>
        <fullName evidence="6">Nectar protein 1</fullName>
        <shortName evidence="6">NmNec1</shortName>
    </alternativeName>
</protein>